<dbReference type="EMBL" id="M19883">
    <property type="protein sequence ID" value="AAA72642.1"/>
    <property type="molecule type" value="Genomic_DNA"/>
</dbReference>
<dbReference type="EMBL" id="AE004437">
    <property type="protein sequence ID" value="AAG19425.1"/>
    <property type="status" value="ALT_INIT"/>
    <property type="molecule type" value="Genomic_DNA"/>
</dbReference>
<dbReference type="PIR" id="B28944">
    <property type="entry name" value="B28944"/>
</dbReference>
<dbReference type="PIR" id="E84257">
    <property type="entry name" value="E84257"/>
</dbReference>
<dbReference type="RefSeq" id="WP_012289264.1">
    <property type="nucleotide sequence ID" value="NC_002607.1"/>
</dbReference>
<dbReference type="SMR" id="P13075"/>
<dbReference type="FunCoup" id="P13075">
    <property type="interactions" value="2"/>
</dbReference>
<dbReference type="STRING" id="64091.VNG_1009G"/>
<dbReference type="PaxDb" id="64091-VNG_1009G"/>
<dbReference type="KEGG" id="hal:VNG_1009G"/>
<dbReference type="PATRIC" id="fig|64091.14.peg.772"/>
<dbReference type="HOGENOM" id="CLU_051124_1_0_2"/>
<dbReference type="InParanoid" id="P13075"/>
<dbReference type="OrthoDB" id="102632at2157"/>
<dbReference type="PhylomeDB" id="P13075"/>
<dbReference type="Proteomes" id="UP000000554">
    <property type="component" value="Chromosome"/>
</dbReference>
<dbReference type="GO" id="GO:0097589">
    <property type="term" value="C:archaeal-type flagellum"/>
    <property type="evidence" value="ECO:0007669"/>
    <property type="project" value="UniProtKB-SubCell"/>
</dbReference>
<dbReference type="GO" id="GO:0005198">
    <property type="term" value="F:structural molecule activity"/>
    <property type="evidence" value="ECO:0007669"/>
    <property type="project" value="InterPro"/>
</dbReference>
<dbReference type="GO" id="GO:0097588">
    <property type="term" value="P:archaeal or bacterial-type flagellum-dependent cell motility"/>
    <property type="evidence" value="ECO:0007669"/>
    <property type="project" value="InterPro"/>
</dbReference>
<dbReference type="InterPro" id="IPR013373">
    <property type="entry name" value="Flagellin/pilin_N_arc"/>
</dbReference>
<dbReference type="InterPro" id="IPR002774">
    <property type="entry name" value="Flagellin_arc"/>
</dbReference>
<dbReference type="NCBIfam" id="TIGR02537">
    <property type="entry name" value="arch_flag_Nterm"/>
    <property type="match status" value="1"/>
</dbReference>
<dbReference type="PANTHER" id="PTHR35903">
    <property type="entry name" value="FLAGELLIN B1"/>
    <property type="match status" value="1"/>
</dbReference>
<dbReference type="PANTHER" id="PTHR35903:SF1">
    <property type="entry name" value="FLAGELLIN B1"/>
    <property type="match status" value="1"/>
</dbReference>
<dbReference type="Pfam" id="PF01917">
    <property type="entry name" value="Arch_flagellin"/>
    <property type="match status" value="1"/>
</dbReference>
<keyword id="KW-0974">Archaeal flagellum</keyword>
<keyword id="KW-0325">Glycoprotein</keyword>
<keyword id="KW-1185">Reference proteome</keyword>
<accession>P13075</accession>
<accession>Q9HQT8</accession>
<proteinExistence type="inferred from homology"/>
<sequence length="194" mass="20605">MFEFITDEDERGQVGIGTLIVFIAMVLVAAIAAGVLINTAGFLQSKGSATGEEASAQVSNRINIVSAYGNVNNEEVDYVNLTVRQAAGADNINLSKSTIQWIGPDKATTLTHANAADKTTLGEEFNTTSIKGNNDNVLVQQSDRIKVIMYAGGVSSKLGAGDEVQLTVTTQYGSKTTYWANVPESLKDKNAVKL</sequence>
<reference key="1">
    <citation type="journal article" date="1988" name="J. Biol. Chem.">
        <title>Halobacterial flagellins are encoded by a multigene family. Characterization of five flagellin genes.</title>
        <authorList>
            <person name="Gerl L."/>
            <person name="Sumper M."/>
        </authorList>
    </citation>
    <scope>NUCLEOTIDE SEQUENCE [GENOMIC DNA]</scope>
</reference>
<reference key="2">
    <citation type="journal article" date="2000" name="Proc. Natl. Acad. Sci. U.S.A.">
        <title>Genome sequence of Halobacterium species NRC-1.</title>
        <authorList>
            <person name="Ng W.V."/>
            <person name="Kennedy S.P."/>
            <person name="Mahairas G.G."/>
            <person name="Berquist B."/>
            <person name="Pan M."/>
            <person name="Shukla H.D."/>
            <person name="Lasky S.R."/>
            <person name="Baliga N.S."/>
            <person name="Thorsson V."/>
            <person name="Sbrogna J."/>
            <person name="Swartzell S."/>
            <person name="Weir D."/>
            <person name="Hall J."/>
            <person name="Dahl T.A."/>
            <person name="Welti R."/>
            <person name="Goo Y.A."/>
            <person name="Leithauser B."/>
            <person name="Keller K."/>
            <person name="Cruz R."/>
            <person name="Danson M.J."/>
            <person name="Hough D.W."/>
            <person name="Maddocks D.G."/>
            <person name="Jablonski P.E."/>
            <person name="Krebs M.P."/>
            <person name="Angevine C.M."/>
            <person name="Dale H."/>
            <person name="Isenbarger T.A."/>
            <person name="Peck R.F."/>
            <person name="Pohlschroder M."/>
            <person name="Spudich J.L."/>
            <person name="Jung K.-H."/>
            <person name="Alam M."/>
            <person name="Freitas T."/>
            <person name="Hou S."/>
            <person name="Daniels C.J."/>
            <person name="Dennis P.P."/>
            <person name="Omer A.D."/>
            <person name="Ebhardt H."/>
            <person name="Lowe T.M."/>
            <person name="Liang P."/>
            <person name="Riley M."/>
            <person name="Hood L."/>
            <person name="DasSarma S."/>
        </authorList>
    </citation>
    <scope>NUCLEOTIDE SEQUENCE [LARGE SCALE GENOMIC DNA]</scope>
    <source>
        <strain>ATCC 700922 / JCM 11081 / NRC-1</strain>
    </source>
</reference>
<organism>
    <name type="scientific">Halobacterium salinarum (strain ATCC 700922 / JCM 11081 / NRC-1)</name>
    <name type="common">Halobacterium halobium</name>
    <dbReference type="NCBI Taxonomy" id="64091"/>
    <lineage>
        <taxon>Archaea</taxon>
        <taxon>Methanobacteriati</taxon>
        <taxon>Methanobacteriota</taxon>
        <taxon>Stenosarchaea group</taxon>
        <taxon>Halobacteria</taxon>
        <taxon>Halobacteriales</taxon>
        <taxon>Halobacteriaceae</taxon>
        <taxon>Halobacterium</taxon>
        <taxon>Halobacterium salinarum NRC-34001</taxon>
    </lineage>
</organism>
<name>FLAA2_HALSA</name>
<comment type="function">
    <text>Flagellin is the subunit protein which polymerizes to form the filaments of archaeal flagella.</text>
</comment>
<comment type="subcellular location">
    <subcellularLocation>
        <location>Archaeal flagellum</location>
    </subcellularLocation>
</comment>
<comment type="PTM">
    <text>Glycosylated.</text>
</comment>
<comment type="similarity">
    <text evidence="2">Belongs to the archaeal flagellin family.</text>
</comment>
<comment type="sequence caution" evidence="2">
    <conflict type="erroneous initiation">
        <sequence resource="EMBL-CDS" id="AAG19425"/>
    </conflict>
</comment>
<evidence type="ECO:0000255" key="1"/>
<evidence type="ECO:0000305" key="2"/>
<feature type="propeptide" id="PRO_0000009365" evidence="1">
    <location>
        <begin position="1"/>
        <end position="12"/>
    </location>
</feature>
<feature type="chain" id="PRO_0000009366" description="Flagellin A2">
    <location>
        <begin position="13"/>
        <end position="194"/>
    </location>
</feature>
<gene>
    <name type="primary">flaA2</name>
    <name type="ordered locus">VNG_1009G</name>
</gene>
<protein>
    <recommendedName>
        <fullName>Flagellin A2</fullName>
    </recommendedName>
</protein>